<feature type="chain" id="PRO_0000341410" description="Membrane-associated guanylate kinase, WW and PDZ domain-containing protein 3">
    <location>
        <begin position="1"/>
        <end position="1128"/>
    </location>
</feature>
<feature type="domain" description="PDZ 1" evidence="3">
    <location>
        <begin position="22"/>
        <end position="108"/>
    </location>
</feature>
<feature type="domain" description="Guanylate kinase-like" evidence="2">
    <location>
        <begin position="116"/>
        <end position="290"/>
    </location>
</feature>
<feature type="domain" description="WW 1" evidence="4">
    <location>
        <begin position="295"/>
        <end position="328"/>
    </location>
</feature>
<feature type="domain" description="WW 2" evidence="4">
    <location>
        <begin position="341"/>
        <end position="374"/>
    </location>
</feature>
<feature type="domain" description="PDZ 2" evidence="3">
    <location>
        <begin position="412"/>
        <end position="494"/>
    </location>
</feature>
<feature type="domain" description="PDZ 3" evidence="3">
    <location>
        <begin position="581"/>
        <end position="657"/>
    </location>
</feature>
<feature type="domain" description="PDZ 4" evidence="3">
    <location>
        <begin position="728"/>
        <end position="810"/>
    </location>
</feature>
<feature type="domain" description="PDZ 5" evidence="3">
    <location>
        <begin position="852"/>
        <end position="939"/>
    </location>
</feature>
<feature type="domain" description="PDZ 6" evidence="3">
    <location>
        <begin position="1024"/>
        <end position="1106"/>
    </location>
</feature>
<feature type="region of interest" description="Disordered" evidence="5">
    <location>
        <begin position="184"/>
        <end position="276"/>
    </location>
</feature>
<feature type="region of interest" description="Disordered" evidence="5">
    <location>
        <begin position="658"/>
        <end position="688"/>
    </location>
</feature>
<feature type="region of interest" description="Disordered" evidence="5">
    <location>
        <begin position="939"/>
        <end position="985"/>
    </location>
</feature>
<feature type="region of interest" description="Disordered" evidence="5">
    <location>
        <begin position="999"/>
        <end position="1018"/>
    </location>
</feature>
<feature type="compositionally biased region" description="Pro residues" evidence="5">
    <location>
        <begin position="193"/>
        <end position="204"/>
    </location>
</feature>
<feature type="compositionally biased region" description="Acidic residues" evidence="5">
    <location>
        <begin position="238"/>
        <end position="247"/>
    </location>
</feature>
<feature type="compositionally biased region" description="Basic and acidic residues" evidence="5">
    <location>
        <begin position="257"/>
        <end position="267"/>
    </location>
</feature>
<feature type="compositionally biased region" description="Polar residues" evidence="5">
    <location>
        <begin position="946"/>
        <end position="956"/>
    </location>
</feature>
<feature type="compositionally biased region" description="Polar residues" evidence="5">
    <location>
        <begin position="965"/>
        <end position="974"/>
    </location>
</feature>
<feature type="binding site" evidence="2">
    <location>
        <begin position="123"/>
        <end position="130"/>
    </location>
    <ligand>
        <name>ATP</name>
        <dbReference type="ChEBI" id="CHEBI:30616"/>
    </ligand>
</feature>
<name>MAGI3_CHICK</name>
<accession>Q5F488</accession>
<protein>
    <recommendedName>
        <fullName>Membrane-associated guanylate kinase, WW and PDZ domain-containing protein 3</fullName>
    </recommendedName>
    <alternativeName>
        <fullName>Membrane-associated guanylate kinase inverted 3</fullName>
        <shortName>MAGI-3</shortName>
    </alternativeName>
</protein>
<proteinExistence type="evidence at transcript level"/>
<sequence>MSKTLRKKRHWLSKVQECVVSWGGPAGPDPELLHGGAERGEFPYLAGRLPTGAEGAPGPALLSGKAPAPGDVLLEVNGTPVSGLTHRDTLAVIRHFREPVRLKTVRPGKVINKDLRHYLSLQFQKGSIDHKLQQVIRDNLYLRTIPCTTRAPRDGEVPGVDYNFIPVEQFKALEESGALLESGTYDGNFYGTPKPPAEPSPFQPDPVDQVLFDNDFDTESQRKRTTSVSKMQRMDSSLPEDEEEEEKEAVNGSGGIENKEKHSDSSDWMKPVPSYNQTSSSMDFRNYMSRDETLEPLPKNWEMAYTDTGMIYFIDHNTKTTTWLDPRLCKKAKAPEDCEDGELPYGWEKIEDPQYGTYYVDHINQKTQFENPVLEAKRKKQLGQTDGGPSKSVPEKSLFTRDPSQLIGALIRTSLKKSTMGFGFTIIGGDRPDEFLQVKNVLKDGPAAQDGRIAPGDVIVDINGNCVLGHTHADVVQMFQLVPVNQYVNMTLCRGYPLPDDNEDPVVDIVTATPIINGPPVTKGDICLTSQELIAGTVVLDQNGKTGPMLVNGRLNGPSMDTNEQRISVASSGGSQPELVTIPLVKGPKGFGFAIADSPTGQKVKMILDSQWCQGLQKGDVIKEICHQNVQSLTHLQVVEVLKQFPIGAEVPLLILRGGPPSPTKTGKMKDKQESSGSLEALSDAIPQPMPFPPTAVRSGSPKLDPSEVYLKSKTMYEDKPPNTRDLDVFLRKQESGFGFRVLGGDGADQPIYIGAIIPLGAAEKDGRLRAADELMCIDGVPVKGKSHKQVLDLMTSAARNGQVLLTVRRKIFFGGEKQAEEDESQAVVTQNSSPRLNRAEFATQQSPEVYDVCLQRKENEGFGFVILTSKNKPPPGVIPHKIGRVIDGSPADQCGKLKVGDRISAVNGQSIVELSHDSIVQLIKDAGHVVTLTVVAEEEHRGPPSGTNSAKQSPAPQHRPLGPAQSSASSTDRGATEGEAGKEVSNSYRLSWPEHKHLAQPDAGSASGVGSRHSQAQNSGCFPVELERGPRGFGFSLRGGKEYNMGLFILRLAEDGPAVKDGRVHVGDQIVEINGEPTQGITHTRAIELIQAGGNKVLLLLRPGTGLIPDHSLAPSSLCPYVKPEQH</sequence>
<gene>
    <name type="primary">MAGI3</name>
    <name type="ORF">RCJMB04_2d13</name>
</gene>
<keyword id="KW-0067">ATP-binding</keyword>
<keyword id="KW-0965">Cell junction</keyword>
<keyword id="KW-1003">Cell membrane</keyword>
<keyword id="KW-0472">Membrane</keyword>
<keyword id="KW-0547">Nucleotide-binding</keyword>
<keyword id="KW-1185">Reference proteome</keyword>
<keyword id="KW-0677">Repeat</keyword>
<keyword id="KW-0796">Tight junction</keyword>
<organism>
    <name type="scientific">Gallus gallus</name>
    <name type="common">Chicken</name>
    <dbReference type="NCBI Taxonomy" id="9031"/>
    <lineage>
        <taxon>Eukaryota</taxon>
        <taxon>Metazoa</taxon>
        <taxon>Chordata</taxon>
        <taxon>Craniata</taxon>
        <taxon>Vertebrata</taxon>
        <taxon>Euteleostomi</taxon>
        <taxon>Archelosauria</taxon>
        <taxon>Archosauria</taxon>
        <taxon>Dinosauria</taxon>
        <taxon>Saurischia</taxon>
        <taxon>Theropoda</taxon>
        <taxon>Coelurosauria</taxon>
        <taxon>Aves</taxon>
        <taxon>Neognathae</taxon>
        <taxon>Galloanserae</taxon>
        <taxon>Galliformes</taxon>
        <taxon>Phasianidae</taxon>
        <taxon>Phasianinae</taxon>
        <taxon>Gallus</taxon>
    </lineage>
</organism>
<reference key="1">
    <citation type="journal article" date="2005" name="Genome Biol.">
        <title>Full-length cDNAs from chicken bursal lymphocytes to facilitate gene function analysis.</title>
        <authorList>
            <person name="Caldwell R.B."/>
            <person name="Kierzek A.M."/>
            <person name="Arakawa H."/>
            <person name="Bezzubov Y."/>
            <person name="Zaim J."/>
            <person name="Fiedler P."/>
            <person name="Kutter S."/>
            <person name="Blagodatski A."/>
            <person name="Kostovska D."/>
            <person name="Koter M."/>
            <person name="Plachy J."/>
            <person name="Carninci P."/>
            <person name="Hayashizaki Y."/>
            <person name="Buerstedde J.-M."/>
        </authorList>
    </citation>
    <scope>NUCLEOTIDE SEQUENCE [LARGE SCALE MRNA]</scope>
    <source>
        <strain>CB</strain>
        <tissue>Bursa of Fabricius</tissue>
    </source>
</reference>
<comment type="function">
    <text evidence="1">Acts as a scaffolding protein at cell-cell junctions, thereby regulating various cellular and signaling processes.</text>
</comment>
<comment type="subcellular location">
    <subcellularLocation>
        <location evidence="1">Cell membrane</location>
        <topology evidence="1">Peripheral membrane protein</topology>
    </subcellularLocation>
    <subcellularLocation>
        <location evidence="1">Cell junction</location>
        <location evidence="1">Tight junction</location>
    </subcellularLocation>
</comment>
<comment type="similarity">
    <text evidence="6">Belongs to the MAGUK family.</text>
</comment>
<evidence type="ECO:0000250" key="1"/>
<evidence type="ECO:0000255" key="2">
    <source>
        <dbReference type="PROSITE-ProRule" id="PRU00100"/>
    </source>
</evidence>
<evidence type="ECO:0000255" key="3">
    <source>
        <dbReference type="PROSITE-ProRule" id="PRU00143"/>
    </source>
</evidence>
<evidence type="ECO:0000255" key="4">
    <source>
        <dbReference type="PROSITE-ProRule" id="PRU00224"/>
    </source>
</evidence>
<evidence type="ECO:0000256" key="5">
    <source>
        <dbReference type="SAM" id="MobiDB-lite"/>
    </source>
</evidence>
<evidence type="ECO:0000305" key="6"/>
<dbReference type="EMBL" id="AJ851412">
    <property type="protein sequence ID" value="CAH65046.1"/>
    <property type="molecule type" value="mRNA"/>
</dbReference>
<dbReference type="RefSeq" id="NP_001012715.1">
    <property type="nucleotide sequence ID" value="NM_001012697.1"/>
</dbReference>
<dbReference type="SMR" id="Q5F488"/>
<dbReference type="FunCoup" id="Q5F488">
    <property type="interactions" value="979"/>
</dbReference>
<dbReference type="STRING" id="9031.ENSGALP00000070097"/>
<dbReference type="PaxDb" id="9031-ENSGALP00000002804"/>
<dbReference type="GeneID" id="419877"/>
<dbReference type="KEGG" id="gga:419877"/>
<dbReference type="CTD" id="260425"/>
<dbReference type="VEuPathDB" id="HostDB:geneid_419877"/>
<dbReference type="eggNOG" id="KOG0707">
    <property type="taxonomic scope" value="Eukaryota"/>
</dbReference>
<dbReference type="eggNOG" id="KOG3209">
    <property type="taxonomic scope" value="Eukaryota"/>
</dbReference>
<dbReference type="InParanoid" id="Q5F488"/>
<dbReference type="OrthoDB" id="66881at2759"/>
<dbReference type="PhylomeDB" id="Q5F488"/>
<dbReference type="PRO" id="PR:Q5F488"/>
<dbReference type="Proteomes" id="UP000000539">
    <property type="component" value="Unassembled WGS sequence"/>
</dbReference>
<dbReference type="GO" id="GO:0005923">
    <property type="term" value="C:bicellular tight junction"/>
    <property type="evidence" value="ECO:0007669"/>
    <property type="project" value="UniProtKB-SubCell"/>
</dbReference>
<dbReference type="GO" id="GO:0005911">
    <property type="term" value="C:cell-cell junction"/>
    <property type="evidence" value="ECO:0000318"/>
    <property type="project" value="GO_Central"/>
</dbReference>
<dbReference type="GO" id="GO:0005737">
    <property type="term" value="C:cytoplasm"/>
    <property type="evidence" value="ECO:0000318"/>
    <property type="project" value="GO_Central"/>
</dbReference>
<dbReference type="GO" id="GO:0005886">
    <property type="term" value="C:plasma membrane"/>
    <property type="evidence" value="ECO:0007669"/>
    <property type="project" value="UniProtKB-SubCell"/>
</dbReference>
<dbReference type="GO" id="GO:0045202">
    <property type="term" value="C:synapse"/>
    <property type="evidence" value="ECO:0000314"/>
    <property type="project" value="SynGO"/>
</dbReference>
<dbReference type="GO" id="GO:0005524">
    <property type="term" value="F:ATP binding"/>
    <property type="evidence" value="ECO:0007669"/>
    <property type="project" value="UniProtKB-KW"/>
</dbReference>
<dbReference type="GO" id="GO:0007165">
    <property type="term" value="P:signal transduction"/>
    <property type="evidence" value="ECO:0000318"/>
    <property type="project" value="GO_Central"/>
</dbReference>
<dbReference type="CDD" id="cd06730">
    <property type="entry name" value="PDZ0_MAGI-1_3-like"/>
    <property type="match status" value="1"/>
</dbReference>
<dbReference type="CDD" id="cd06731">
    <property type="entry name" value="PDZ1_MAGI-1_3-like"/>
    <property type="match status" value="1"/>
</dbReference>
<dbReference type="CDD" id="cd06732">
    <property type="entry name" value="PDZ2_MAGI-1_3-like"/>
    <property type="match status" value="1"/>
</dbReference>
<dbReference type="CDD" id="cd06733">
    <property type="entry name" value="PDZ3_MAGI-1_3-like"/>
    <property type="match status" value="1"/>
</dbReference>
<dbReference type="CDD" id="cd06734">
    <property type="entry name" value="PDZ4_MAGI-1_3-like"/>
    <property type="match status" value="1"/>
</dbReference>
<dbReference type="CDD" id="cd06735">
    <property type="entry name" value="PDZ5_MAGI-1_3-like"/>
    <property type="match status" value="1"/>
</dbReference>
<dbReference type="CDD" id="cd00201">
    <property type="entry name" value="WW"/>
    <property type="match status" value="2"/>
</dbReference>
<dbReference type="FunFam" id="2.30.42.10:FF:000005">
    <property type="entry name" value="Membrane associated guanylate kinase, WW and PDZ domain containing 1"/>
    <property type="match status" value="1"/>
</dbReference>
<dbReference type="FunFam" id="2.30.42.10:FF:000006">
    <property type="entry name" value="Membrane associated guanylate kinase, WW and PDZ domain containing 1"/>
    <property type="match status" value="1"/>
</dbReference>
<dbReference type="FunFam" id="2.30.42.10:FF:000012">
    <property type="entry name" value="Membrane associated guanylate kinase, WW and PDZ domain containing 1"/>
    <property type="match status" value="1"/>
</dbReference>
<dbReference type="FunFam" id="2.20.70.10:FF:000001">
    <property type="entry name" value="Membrane-associated guanylate kinase, WW and PDZ domain-containing protein 1"/>
    <property type="match status" value="1"/>
</dbReference>
<dbReference type="FunFam" id="2.30.42.10:FF:000279">
    <property type="entry name" value="Membrane-associated guanylate kinase, WW and PDZ domain-containing protein 3"/>
    <property type="match status" value="1"/>
</dbReference>
<dbReference type="FunFam" id="2.20.70.10:FF:000002">
    <property type="entry name" value="Membrane-associated guanylate kinase, WW and PDZ domain-containing protein 3 isoform 1"/>
    <property type="match status" value="1"/>
</dbReference>
<dbReference type="FunFam" id="2.30.42.10:FF:000042">
    <property type="entry name" value="Membrane-associated guanylate kinase, WW and PDZ domain-containing protein 3 isoform 1"/>
    <property type="match status" value="1"/>
</dbReference>
<dbReference type="FunFam" id="3.30.63.10:FF:000003">
    <property type="entry name" value="Membrane-associated guanylate kinase, WW and PDZ domain-containing protein 3 isoform 1"/>
    <property type="match status" value="1"/>
</dbReference>
<dbReference type="FunFam" id="2.30.42.10:FF:000131">
    <property type="entry name" value="membrane-associated guanylate kinase, WW and PDZ domain-containing protein 3 isoform X1"/>
    <property type="match status" value="1"/>
</dbReference>
<dbReference type="Gene3D" id="2.20.70.10">
    <property type="match status" value="2"/>
</dbReference>
<dbReference type="Gene3D" id="2.30.42.10">
    <property type="match status" value="6"/>
</dbReference>
<dbReference type="Gene3D" id="3.30.63.10">
    <property type="entry name" value="Guanylate Kinase phosphate binding domain"/>
    <property type="match status" value="1"/>
</dbReference>
<dbReference type="InterPro" id="IPR008145">
    <property type="entry name" value="GK/Ca_channel_bsu"/>
</dbReference>
<dbReference type="InterPro" id="IPR008144">
    <property type="entry name" value="Guanylate_kin-like_dom"/>
</dbReference>
<dbReference type="InterPro" id="IPR020590">
    <property type="entry name" value="Guanylate_kinase_CS"/>
</dbReference>
<dbReference type="InterPro" id="IPR027417">
    <property type="entry name" value="P-loop_NTPase"/>
</dbReference>
<dbReference type="InterPro" id="IPR001478">
    <property type="entry name" value="PDZ"/>
</dbReference>
<dbReference type="InterPro" id="IPR036034">
    <property type="entry name" value="PDZ_sf"/>
</dbReference>
<dbReference type="InterPro" id="IPR001202">
    <property type="entry name" value="WW_dom"/>
</dbReference>
<dbReference type="InterPro" id="IPR036020">
    <property type="entry name" value="WW_dom_sf"/>
</dbReference>
<dbReference type="PANTHER" id="PTHR10316">
    <property type="entry name" value="MEMBRANE ASSOCIATED GUANYLATE KINASE-RELATED"/>
    <property type="match status" value="1"/>
</dbReference>
<dbReference type="PANTHER" id="PTHR10316:SF10">
    <property type="entry name" value="MEMBRANE-ASSOCIATED GUANYLATE KINASE, WW AND PDZ DOMAIN-CONTAINING PROTEIN 3"/>
    <property type="match status" value="1"/>
</dbReference>
<dbReference type="Pfam" id="PF00625">
    <property type="entry name" value="Guanylate_kin"/>
    <property type="match status" value="1"/>
</dbReference>
<dbReference type="Pfam" id="PF00595">
    <property type="entry name" value="PDZ"/>
    <property type="match status" value="5"/>
</dbReference>
<dbReference type="Pfam" id="PF00397">
    <property type="entry name" value="WW"/>
    <property type="match status" value="2"/>
</dbReference>
<dbReference type="SMART" id="SM00072">
    <property type="entry name" value="GuKc"/>
    <property type="match status" value="1"/>
</dbReference>
<dbReference type="SMART" id="SM00228">
    <property type="entry name" value="PDZ"/>
    <property type="match status" value="6"/>
</dbReference>
<dbReference type="SMART" id="SM00456">
    <property type="entry name" value="WW"/>
    <property type="match status" value="2"/>
</dbReference>
<dbReference type="SUPFAM" id="SSF52540">
    <property type="entry name" value="P-loop containing nucleoside triphosphate hydrolases"/>
    <property type="match status" value="1"/>
</dbReference>
<dbReference type="SUPFAM" id="SSF50156">
    <property type="entry name" value="PDZ domain-like"/>
    <property type="match status" value="6"/>
</dbReference>
<dbReference type="SUPFAM" id="SSF51045">
    <property type="entry name" value="WW domain"/>
    <property type="match status" value="2"/>
</dbReference>
<dbReference type="PROSITE" id="PS00856">
    <property type="entry name" value="GUANYLATE_KINASE_1"/>
    <property type="match status" value="1"/>
</dbReference>
<dbReference type="PROSITE" id="PS50052">
    <property type="entry name" value="GUANYLATE_KINASE_2"/>
    <property type="match status" value="1"/>
</dbReference>
<dbReference type="PROSITE" id="PS50106">
    <property type="entry name" value="PDZ"/>
    <property type="match status" value="6"/>
</dbReference>
<dbReference type="PROSITE" id="PS01159">
    <property type="entry name" value="WW_DOMAIN_1"/>
    <property type="match status" value="2"/>
</dbReference>
<dbReference type="PROSITE" id="PS50020">
    <property type="entry name" value="WW_DOMAIN_2"/>
    <property type="match status" value="2"/>
</dbReference>